<keyword id="KW-0028">Amino-acid biosynthesis</keyword>
<keyword id="KW-0170">Cobalt</keyword>
<keyword id="KW-0220">Diaminopimelate biosynthesis</keyword>
<keyword id="KW-0378">Hydrolase</keyword>
<keyword id="KW-0457">Lysine biosynthesis</keyword>
<keyword id="KW-0479">Metal-binding</keyword>
<keyword id="KW-1185">Reference proteome</keyword>
<keyword id="KW-0862">Zinc</keyword>
<proteinExistence type="inferred from homology"/>
<comment type="function">
    <text evidence="1">Catalyzes the hydrolysis of N-succinyl-L,L-diaminopimelic acid (SDAP), forming succinate and LL-2,6-diaminopimelate (DAP), an intermediate involved in the bacterial biosynthesis of lysine and meso-diaminopimelic acid, an essential component of bacterial cell walls.</text>
</comment>
<comment type="catalytic activity">
    <reaction evidence="1">
        <text>N-succinyl-(2S,6S)-2,6-diaminopimelate + H2O = (2S,6S)-2,6-diaminopimelate + succinate</text>
        <dbReference type="Rhea" id="RHEA:22608"/>
        <dbReference type="ChEBI" id="CHEBI:15377"/>
        <dbReference type="ChEBI" id="CHEBI:30031"/>
        <dbReference type="ChEBI" id="CHEBI:57609"/>
        <dbReference type="ChEBI" id="CHEBI:58087"/>
        <dbReference type="EC" id="3.5.1.18"/>
    </reaction>
</comment>
<comment type="cofactor">
    <cofactor evidence="1">
        <name>Zn(2+)</name>
        <dbReference type="ChEBI" id="CHEBI:29105"/>
    </cofactor>
    <cofactor evidence="1">
        <name>Co(2+)</name>
        <dbReference type="ChEBI" id="CHEBI:48828"/>
    </cofactor>
    <text evidence="1">Binds 2 Zn(2+) or Co(2+) ions per subunit.</text>
</comment>
<comment type="pathway">
    <text evidence="1">Amino-acid biosynthesis; L-lysine biosynthesis via DAP pathway; LL-2,6-diaminopimelate from (S)-tetrahydrodipicolinate (succinylase route): step 3/3.</text>
</comment>
<comment type="subunit">
    <text evidence="1">Homodimer.</text>
</comment>
<comment type="similarity">
    <text evidence="1">Belongs to the peptidase M20A family. DapE subfamily.</text>
</comment>
<dbReference type="EC" id="3.5.1.18" evidence="1"/>
<dbReference type="EMBL" id="CP000606">
    <property type="protein sequence ID" value="ABO23728.1"/>
    <property type="molecule type" value="Genomic_DNA"/>
</dbReference>
<dbReference type="RefSeq" id="WP_011865660.1">
    <property type="nucleotide sequence ID" value="NC_009092.1"/>
</dbReference>
<dbReference type="SMR" id="A3QE30"/>
<dbReference type="STRING" id="323850.Shew_1862"/>
<dbReference type="KEGG" id="slo:Shew_1862"/>
<dbReference type="eggNOG" id="COG0624">
    <property type="taxonomic scope" value="Bacteria"/>
</dbReference>
<dbReference type="HOGENOM" id="CLU_021802_4_0_6"/>
<dbReference type="OrthoDB" id="9809784at2"/>
<dbReference type="UniPathway" id="UPA00034">
    <property type="reaction ID" value="UER00021"/>
</dbReference>
<dbReference type="Proteomes" id="UP000001558">
    <property type="component" value="Chromosome"/>
</dbReference>
<dbReference type="GO" id="GO:0008777">
    <property type="term" value="F:acetylornithine deacetylase activity"/>
    <property type="evidence" value="ECO:0007669"/>
    <property type="project" value="TreeGrafter"/>
</dbReference>
<dbReference type="GO" id="GO:0050897">
    <property type="term" value="F:cobalt ion binding"/>
    <property type="evidence" value="ECO:0007669"/>
    <property type="project" value="UniProtKB-UniRule"/>
</dbReference>
<dbReference type="GO" id="GO:0009014">
    <property type="term" value="F:succinyl-diaminopimelate desuccinylase activity"/>
    <property type="evidence" value="ECO:0007669"/>
    <property type="project" value="UniProtKB-UniRule"/>
</dbReference>
<dbReference type="GO" id="GO:0008270">
    <property type="term" value="F:zinc ion binding"/>
    <property type="evidence" value="ECO:0007669"/>
    <property type="project" value="UniProtKB-UniRule"/>
</dbReference>
<dbReference type="GO" id="GO:0019877">
    <property type="term" value="P:diaminopimelate biosynthetic process"/>
    <property type="evidence" value="ECO:0007669"/>
    <property type="project" value="UniProtKB-UniRule"/>
</dbReference>
<dbReference type="GO" id="GO:0006526">
    <property type="term" value="P:L-arginine biosynthetic process"/>
    <property type="evidence" value="ECO:0007669"/>
    <property type="project" value="TreeGrafter"/>
</dbReference>
<dbReference type="GO" id="GO:0009089">
    <property type="term" value="P:lysine biosynthetic process via diaminopimelate"/>
    <property type="evidence" value="ECO:0007669"/>
    <property type="project" value="UniProtKB-UniRule"/>
</dbReference>
<dbReference type="CDD" id="cd03891">
    <property type="entry name" value="M20_DapE_proteobac"/>
    <property type="match status" value="1"/>
</dbReference>
<dbReference type="FunFam" id="3.30.70.360:FF:000011">
    <property type="entry name" value="Succinyl-diaminopimelate desuccinylase"/>
    <property type="match status" value="1"/>
</dbReference>
<dbReference type="FunFam" id="3.40.630.10:FF:000005">
    <property type="entry name" value="Succinyl-diaminopimelate desuccinylase"/>
    <property type="match status" value="1"/>
</dbReference>
<dbReference type="Gene3D" id="3.40.630.10">
    <property type="entry name" value="Zn peptidases"/>
    <property type="match status" value="2"/>
</dbReference>
<dbReference type="HAMAP" id="MF_01690">
    <property type="entry name" value="DapE"/>
    <property type="match status" value="1"/>
</dbReference>
<dbReference type="InterPro" id="IPR001261">
    <property type="entry name" value="ArgE/DapE_CS"/>
</dbReference>
<dbReference type="InterPro" id="IPR036264">
    <property type="entry name" value="Bact_exopeptidase_dim_dom"/>
</dbReference>
<dbReference type="InterPro" id="IPR005941">
    <property type="entry name" value="DapE_proteobac"/>
</dbReference>
<dbReference type="InterPro" id="IPR002933">
    <property type="entry name" value="Peptidase_M20"/>
</dbReference>
<dbReference type="InterPro" id="IPR011650">
    <property type="entry name" value="Peptidase_M20_dimer"/>
</dbReference>
<dbReference type="InterPro" id="IPR050072">
    <property type="entry name" value="Peptidase_M20A"/>
</dbReference>
<dbReference type="NCBIfam" id="TIGR01246">
    <property type="entry name" value="dapE_proteo"/>
    <property type="match status" value="1"/>
</dbReference>
<dbReference type="NCBIfam" id="NF009557">
    <property type="entry name" value="PRK13009.1"/>
    <property type="match status" value="1"/>
</dbReference>
<dbReference type="PANTHER" id="PTHR43808">
    <property type="entry name" value="ACETYLORNITHINE DEACETYLASE"/>
    <property type="match status" value="1"/>
</dbReference>
<dbReference type="PANTHER" id="PTHR43808:SF31">
    <property type="entry name" value="N-ACETYL-L-CITRULLINE DEACETYLASE"/>
    <property type="match status" value="1"/>
</dbReference>
<dbReference type="Pfam" id="PF07687">
    <property type="entry name" value="M20_dimer"/>
    <property type="match status" value="1"/>
</dbReference>
<dbReference type="Pfam" id="PF01546">
    <property type="entry name" value="Peptidase_M20"/>
    <property type="match status" value="1"/>
</dbReference>
<dbReference type="SUPFAM" id="SSF55031">
    <property type="entry name" value="Bacterial exopeptidase dimerisation domain"/>
    <property type="match status" value="1"/>
</dbReference>
<dbReference type="SUPFAM" id="SSF53187">
    <property type="entry name" value="Zn-dependent exopeptidases"/>
    <property type="match status" value="1"/>
</dbReference>
<dbReference type="PROSITE" id="PS00759">
    <property type="entry name" value="ARGE_DAPE_CPG2_2"/>
    <property type="match status" value="1"/>
</dbReference>
<evidence type="ECO:0000255" key="1">
    <source>
        <dbReference type="HAMAP-Rule" id="MF_01690"/>
    </source>
</evidence>
<gene>
    <name evidence="1" type="primary">dapE1</name>
    <name type="ordered locus">Shew_1862</name>
</gene>
<feature type="chain" id="PRO_0000375733" description="Succinyl-diaminopimelate desuccinylase 1">
    <location>
        <begin position="1"/>
        <end position="376"/>
    </location>
</feature>
<feature type="active site" evidence="1">
    <location>
        <position position="69"/>
    </location>
</feature>
<feature type="active site" description="Proton acceptor" evidence="1">
    <location>
        <position position="134"/>
    </location>
</feature>
<feature type="binding site" evidence="1">
    <location>
        <position position="67"/>
    </location>
    <ligand>
        <name>Zn(2+)</name>
        <dbReference type="ChEBI" id="CHEBI:29105"/>
        <label>1</label>
    </ligand>
</feature>
<feature type="binding site" evidence="1">
    <location>
        <position position="100"/>
    </location>
    <ligand>
        <name>Zn(2+)</name>
        <dbReference type="ChEBI" id="CHEBI:29105"/>
        <label>1</label>
    </ligand>
</feature>
<feature type="binding site" evidence="1">
    <location>
        <position position="100"/>
    </location>
    <ligand>
        <name>Zn(2+)</name>
        <dbReference type="ChEBI" id="CHEBI:29105"/>
        <label>2</label>
    </ligand>
</feature>
<feature type="binding site" evidence="1">
    <location>
        <position position="135"/>
    </location>
    <ligand>
        <name>Zn(2+)</name>
        <dbReference type="ChEBI" id="CHEBI:29105"/>
        <label>2</label>
    </ligand>
</feature>
<feature type="binding site" evidence="1">
    <location>
        <position position="163"/>
    </location>
    <ligand>
        <name>Zn(2+)</name>
        <dbReference type="ChEBI" id="CHEBI:29105"/>
        <label>1</label>
    </ligand>
</feature>
<feature type="binding site" evidence="1">
    <location>
        <position position="349"/>
    </location>
    <ligand>
        <name>Zn(2+)</name>
        <dbReference type="ChEBI" id="CHEBI:29105"/>
        <label>2</label>
    </ligand>
</feature>
<protein>
    <recommendedName>
        <fullName evidence="1">Succinyl-diaminopimelate desuccinylase 1</fullName>
        <shortName evidence="1">SDAP desuccinylase 1</shortName>
        <ecNumber evidence="1">3.5.1.18</ecNumber>
    </recommendedName>
    <alternativeName>
        <fullName evidence="1">N-succinyl-LL-2,6-diaminoheptanedioate amidohydrolase 1</fullName>
    </alternativeName>
</protein>
<sequence>MSQDVLTLAQDLIARASVTPLDEGCQPLMAKRLAAKGFNIEPMVFEDTTNMWARRGDQGPLFCFAGHTDVVPVGDLNRWHTPPFEPVVIDGYLHGRGAADMKGSLAAMVVATERFVDKHPDHKGSIAFLITSDEEGPFINGTTRVIDTLEARNEKITWSLVGEPSSTHKLGDIVKNGRRGSLTGNLTVKGVQGHVAYPHLADNPIHKAAPALDELARMKWDNGNEFFPPTSFQIANINGGTGASNVIPGSLEVMFNFRYSTEVTAEILIQRVLNILDAHGLDYDISWIFNGLPFLTDAGPLLDATREAIYEITGTETDPQTSGGTSDGRFIAPTGAQVIELGPVNATIHKVNECVKVEDIEQLAKVYERILEKLLC</sequence>
<accession>A3QE30</accession>
<name>DAPE1_SHELP</name>
<reference key="1">
    <citation type="submission" date="2007-03" db="EMBL/GenBank/DDBJ databases">
        <title>Complete sequence of Shewanella loihica PV-4.</title>
        <authorList>
            <consortium name="US DOE Joint Genome Institute"/>
            <person name="Copeland A."/>
            <person name="Lucas S."/>
            <person name="Lapidus A."/>
            <person name="Barry K."/>
            <person name="Detter J.C."/>
            <person name="Glavina del Rio T."/>
            <person name="Hammon N."/>
            <person name="Israni S."/>
            <person name="Dalin E."/>
            <person name="Tice H."/>
            <person name="Pitluck S."/>
            <person name="Chain P."/>
            <person name="Malfatti S."/>
            <person name="Shin M."/>
            <person name="Vergez L."/>
            <person name="Schmutz J."/>
            <person name="Larimer F."/>
            <person name="Land M."/>
            <person name="Hauser L."/>
            <person name="Kyrpides N."/>
            <person name="Mikhailova N."/>
            <person name="Romine M.F."/>
            <person name="Serres G."/>
            <person name="Fredrickson J."/>
            <person name="Tiedje J."/>
            <person name="Richardson P."/>
        </authorList>
    </citation>
    <scope>NUCLEOTIDE SEQUENCE [LARGE SCALE GENOMIC DNA]</scope>
    <source>
        <strain>ATCC BAA-1088 / PV-4</strain>
    </source>
</reference>
<organism>
    <name type="scientific">Shewanella loihica (strain ATCC BAA-1088 / PV-4)</name>
    <dbReference type="NCBI Taxonomy" id="323850"/>
    <lineage>
        <taxon>Bacteria</taxon>
        <taxon>Pseudomonadati</taxon>
        <taxon>Pseudomonadota</taxon>
        <taxon>Gammaproteobacteria</taxon>
        <taxon>Alteromonadales</taxon>
        <taxon>Shewanellaceae</taxon>
        <taxon>Shewanella</taxon>
    </lineage>
</organism>